<keyword id="KW-0249">Electron transport</keyword>
<keyword id="KW-0274">FAD</keyword>
<keyword id="KW-0285">Flavoprotein</keyword>
<keyword id="KW-0406">Ion transport</keyword>
<keyword id="KW-0472">Membrane</keyword>
<keyword id="KW-0521">NADP</keyword>
<keyword id="KW-0560">Oxidoreductase</keyword>
<keyword id="KW-1185">Reference proteome</keyword>
<keyword id="KW-0812">Transmembrane</keyword>
<keyword id="KW-1133">Transmembrane helix</keyword>
<keyword id="KW-0813">Transport</keyword>
<feature type="chain" id="PRO_0000408745" description="Probable metalloreductase AIM14">
    <location>
        <begin position="1"/>
        <end position="508"/>
    </location>
</feature>
<feature type="transmembrane region" description="Helical" evidence="2">
    <location>
        <begin position="18"/>
        <end position="38"/>
    </location>
</feature>
<feature type="transmembrane region" description="Helical" evidence="2">
    <location>
        <begin position="70"/>
        <end position="90"/>
    </location>
</feature>
<feature type="transmembrane region" description="Helical" evidence="2">
    <location>
        <begin position="100"/>
        <end position="120"/>
    </location>
</feature>
<feature type="transmembrane region" description="Helical" evidence="2">
    <location>
        <begin position="137"/>
        <end position="157"/>
    </location>
</feature>
<feature type="transmembrane region" description="Helical" evidence="2">
    <location>
        <begin position="168"/>
        <end position="188"/>
    </location>
</feature>
<feature type="transmembrane region" description="Helical" evidence="2">
    <location>
        <begin position="198"/>
        <end position="218"/>
    </location>
</feature>
<feature type="transmembrane region" description="Helical" evidence="2">
    <location>
        <begin position="222"/>
        <end position="242"/>
    </location>
</feature>
<feature type="transmembrane region" description="Helical" evidence="2">
    <location>
        <begin position="347"/>
        <end position="367"/>
    </location>
</feature>
<feature type="domain" description="Ferric oxidoreductase">
    <location>
        <begin position="97"/>
        <end position="214"/>
    </location>
</feature>
<feature type="domain" description="FAD-binding FR-type">
    <location>
        <begin position="241"/>
        <end position="361"/>
    </location>
</feature>
<gene>
    <name type="primary">AIM14</name>
    <name type="ordered locus">KLLA0F23034g</name>
</gene>
<protein>
    <recommendedName>
        <fullName>Probable metalloreductase AIM14</fullName>
        <ecNumber>1.16.1.-</ecNumber>
    </recommendedName>
</protein>
<proteinExistence type="inferred from homology"/>
<comment type="function">
    <text evidence="1">Probable cell surface metalloreductase. May be involved in iron or copper homeostasis (By similarity).</text>
</comment>
<comment type="subcellular location">
    <subcellularLocation>
        <location evidence="1">Membrane</location>
        <topology evidence="1">Multi-pass membrane protein</topology>
    </subcellularLocation>
</comment>
<comment type="similarity">
    <text evidence="3">Belongs to the ferric reductase (FRE) family. AIM14 subfamily.</text>
</comment>
<reference key="1">
    <citation type="journal article" date="2004" name="Nature">
        <title>Genome evolution in yeasts.</title>
        <authorList>
            <person name="Dujon B."/>
            <person name="Sherman D."/>
            <person name="Fischer G."/>
            <person name="Durrens P."/>
            <person name="Casaregola S."/>
            <person name="Lafontaine I."/>
            <person name="de Montigny J."/>
            <person name="Marck C."/>
            <person name="Neuveglise C."/>
            <person name="Talla E."/>
            <person name="Goffard N."/>
            <person name="Frangeul L."/>
            <person name="Aigle M."/>
            <person name="Anthouard V."/>
            <person name="Babour A."/>
            <person name="Barbe V."/>
            <person name="Barnay S."/>
            <person name="Blanchin S."/>
            <person name="Beckerich J.-M."/>
            <person name="Beyne E."/>
            <person name="Bleykasten C."/>
            <person name="Boisrame A."/>
            <person name="Boyer J."/>
            <person name="Cattolico L."/>
            <person name="Confanioleri F."/>
            <person name="de Daruvar A."/>
            <person name="Despons L."/>
            <person name="Fabre E."/>
            <person name="Fairhead C."/>
            <person name="Ferry-Dumazet H."/>
            <person name="Groppi A."/>
            <person name="Hantraye F."/>
            <person name="Hennequin C."/>
            <person name="Jauniaux N."/>
            <person name="Joyet P."/>
            <person name="Kachouri R."/>
            <person name="Kerrest A."/>
            <person name="Koszul R."/>
            <person name="Lemaire M."/>
            <person name="Lesur I."/>
            <person name="Ma L."/>
            <person name="Muller H."/>
            <person name="Nicaud J.-M."/>
            <person name="Nikolski M."/>
            <person name="Oztas S."/>
            <person name="Ozier-Kalogeropoulos O."/>
            <person name="Pellenz S."/>
            <person name="Potier S."/>
            <person name="Richard G.-F."/>
            <person name="Straub M.-L."/>
            <person name="Suleau A."/>
            <person name="Swennen D."/>
            <person name="Tekaia F."/>
            <person name="Wesolowski-Louvel M."/>
            <person name="Westhof E."/>
            <person name="Wirth B."/>
            <person name="Zeniou-Meyer M."/>
            <person name="Zivanovic Y."/>
            <person name="Bolotin-Fukuhara M."/>
            <person name="Thierry A."/>
            <person name="Bouchier C."/>
            <person name="Caudron B."/>
            <person name="Scarpelli C."/>
            <person name="Gaillardin C."/>
            <person name="Weissenbach J."/>
            <person name="Wincker P."/>
            <person name="Souciet J.-L."/>
        </authorList>
    </citation>
    <scope>NUCLEOTIDE SEQUENCE [LARGE SCALE GENOMIC DNA]</scope>
    <source>
        <strain>ATCC 8585 / CBS 2359 / DSM 70799 / NBRC 1267 / NRRL Y-1140 / WM37</strain>
    </source>
</reference>
<sequence length="508" mass="58953">MDASSLVKRGSSTHYANLPYGYYVLGVIVFYTIFLIVMRWLIPSRYTKVSPWKNKLLQSIRTASPCFHMPLLLLLVFVPFIHKYSLVAYISLYLKRLGRLSYVLVILNVLLTLRPANPILGYHYLDLIPLHKWLSRFVTVIGIIHGIGFIVKWSLDPKVSMISKATKLFNFIGVIAFVPLFILMFASVRIWRRYSYRSFYVIHQLGQWAMVFLVPIHARPRVTVPYFFILLALYIWRGISYIYYSTTVNVTQRVKDDTSLTYVKLDRSAIRDWLPGSHLRLSKYKKKNPLYWLMPTQPYTIASLPDESQIDLIIRENLTPYVVVGEYTVVDVYSTVPPSLLYDSQRVAIVVGGSGISFGLSIFKYLQTRNLDYLKFIWLIREREDMHILNHCNFETNDLEVYVTRSLPPDDTQTKSMNANGSSEFDDIDFELETMDESGALLTNDSKSPSLVHFGRRLDWQVDLAQFIESHALQNSWLVCCGPESLLTDGERYAKQNYCNFVKEFYDI</sequence>
<evidence type="ECO:0000250" key="1"/>
<evidence type="ECO:0000255" key="2"/>
<evidence type="ECO:0000305" key="3"/>
<dbReference type="EC" id="1.16.1.-"/>
<dbReference type="EMBL" id="CR382126">
    <property type="protein sequence ID" value="CAG98815.1"/>
    <property type="molecule type" value="Genomic_DNA"/>
</dbReference>
<dbReference type="RefSeq" id="XP_456107.1">
    <property type="nucleotide sequence ID" value="XM_456107.1"/>
</dbReference>
<dbReference type="SMR" id="Q6CIY2"/>
<dbReference type="FunCoup" id="Q6CIY2">
    <property type="interactions" value="25"/>
</dbReference>
<dbReference type="STRING" id="284590.Q6CIY2"/>
<dbReference type="PaxDb" id="284590-Q6CIY2"/>
<dbReference type="KEGG" id="kla:KLLA0_F23034g"/>
<dbReference type="eggNOG" id="KOG0039">
    <property type="taxonomic scope" value="Eukaryota"/>
</dbReference>
<dbReference type="HOGENOM" id="CLU_036508_0_0_1"/>
<dbReference type="InParanoid" id="Q6CIY2"/>
<dbReference type="OMA" id="GRMAYCL"/>
<dbReference type="Proteomes" id="UP000000598">
    <property type="component" value="Chromosome F"/>
</dbReference>
<dbReference type="GO" id="GO:0005886">
    <property type="term" value="C:plasma membrane"/>
    <property type="evidence" value="ECO:0007669"/>
    <property type="project" value="TreeGrafter"/>
</dbReference>
<dbReference type="GO" id="GO:0000293">
    <property type="term" value="F:ferric-chelate reductase activity"/>
    <property type="evidence" value="ECO:0007669"/>
    <property type="project" value="TreeGrafter"/>
</dbReference>
<dbReference type="GO" id="GO:0033215">
    <property type="term" value="P:reductive iron assimilation"/>
    <property type="evidence" value="ECO:0007669"/>
    <property type="project" value="TreeGrafter"/>
</dbReference>
<dbReference type="CDD" id="cd06186">
    <property type="entry name" value="NOX_Duox_like_FAD_NADP"/>
    <property type="match status" value="1"/>
</dbReference>
<dbReference type="Gene3D" id="3.40.50.80">
    <property type="entry name" value="Nucleotide-binding domain of ferredoxin-NADP reductase (FNR) module"/>
    <property type="match status" value="1"/>
</dbReference>
<dbReference type="InterPro" id="IPR013112">
    <property type="entry name" value="FAD-bd_8"/>
</dbReference>
<dbReference type="InterPro" id="IPR013130">
    <property type="entry name" value="Fe3_Rdtase_TM_dom"/>
</dbReference>
<dbReference type="InterPro" id="IPR013121">
    <property type="entry name" value="Fe_red_NAD-bd_6"/>
</dbReference>
<dbReference type="InterPro" id="IPR039261">
    <property type="entry name" value="FNR_nucleotide-bd"/>
</dbReference>
<dbReference type="InterPro" id="IPR050369">
    <property type="entry name" value="RBOH/FRE"/>
</dbReference>
<dbReference type="PANTHER" id="PTHR11972:SF198">
    <property type="entry name" value="METALLOREDUCTASE AIM14-RELATED"/>
    <property type="match status" value="1"/>
</dbReference>
<dbReference type="PANTHER" id="PTHR11972">
    <property type="entry name" value="NADPH OXIDASE"/>
    <property type="match status" value="1"/>
</dbReference>
<dbReference type="Pfam" id="PF08022">
    <property type="entry name" value="FAD_binding_8"/>
    <property type="match status" value="1"/>
</dbReference>
<dbReference type="Pfam" id="PF01794">
    <property type="entry name" value="Ferric_reduct"/>
    <property type="match status" value="1"/>
</dbReference>
<dbReference type="Pfam" id="PF08030">
    <property type="entry name" value="NAD_binding_6"/>
    <property type="match status" value="1"/>
</dbReference>
<dbReference type="SFLD" id="SFLDF00463">
    <property type="entry name" value="AIM14"/>
    <property type="match status" value="1"/>
</dbReference>
<dbReference type="SFLD" id="SFLDS00052">
    <property type="entry name" value="Ferric_Reductase_Domain"/>
    <property type="match status" value="1"/>
</dbReference>
<dbReference type="SFLD" id="SFLDG01168">
    <property type="entry name" value="Ferric_reductase_subgroup_(FRE"/>
    <property type="match status" value="1"/>
</dbReference>
<dbReference type="SUPFAM" id="SSF52343">
    <property type="entry name" value="Ferredoxin reductase-like, C-terminal NADP-linked domain"/>
    <property type="match status" value="1"/>
</dbReference>
<organism>
    <name type="scientific">Kluyveromyces lactis (strain ATCC 8585 / CBS 2359 / DSM 70799 / NBRC 1267 / NRRL Y-1140 / WM37)</name>
    <name type="common">Yeast</name>
    <name type="synonym">Candida sphaerica</name>
    <dbReference type="NCBI Taxonomy" id="284590"/>
    <lineage>
        <taxon>Eukaryota</taxon>
        <taxon>Fungi</taxon>
        <taxon>Dikarya</taxon>
        <taxon>Ascomycota</taxon>
        <taxon>Saccharomycotina</taxon>
        <taxon>Saccharomycetes</taxon>
        <taxon>Saccharomycetales</taxon>
        <taxon>Saccharomycetaceae</taxon>
        <taxon>Kluyveromyces</taxon>
    </lineage>
</organism>
<name>AIM14_KLULA</name>
<accession>Q6CIY2</accession>